<evidence type="ECO:0000255" key="1">
    <source>
        <dbReference type="HAMAP-Rule" id="MF_00708"/>
    </source>
</evidence>
<accession>B7NTL3</accession>
<proteinExistence type="inferred from homology"/>
<organism>
    <name type="scientific">Escherichia coli O7:K1 (strain IAI39 / ExPEC)</name>
    <dbReference type="NCBI Taxonomy" id="585057"/>
    <lineage>
        <taxon>Bacteria</taxon>
        <taxon>Pseudomonadati</taxon>
        <taxon>Pseudomonadota</taxon>
        <taxon>Gammaproteobacteria</taxon>
        <taxon>Enterobacterales</taxon>
        <taxon>Enterobacteriaceae</taxon>
        <taxon>Escherichia</taxon>
    </lineage>
</organism>
<feature type="chain" id="PRO_1000132371" description="Fumarate reductase subunit C">
    <location>
        <begin position="1"/>
        <end position="131"/>
    </location>
</feature>
<feature type="transmembrane region" description="Helical" evidence="1">
    <location>
        <begin position="30"/>
        <end position="50"/>
    </location>
</feature>
<feature type="transmembrane region" description="Helical" evidence="1">
    <location>
        <begin position="63"/>
        <end position="83"/>
    </location>
</feature>
<feature type="transmembrane region" description="Helical" evidence="1">
    <location>
        <begin position="109"/>
        <end position="129"/>
    </location>
</feature>
<dbReference type="EMBL" id="CU928164">
    <property type="protein sequence ID" value="CAR20719.1"/>
    <property type="molecule type" value="Genomic_DNA"/>
</dbReference>
<dbReference type="RefSeq" id="WP_000208757.1">
    <property type="nucleotide sequence ID" value="NC_011750.1"/>
</dbReference>
<dbReference type="RefSeq" id="YP_002410483.1">
    <property type="nucleotide sequence ID" value="NC_011750.1"/>
</dbReference>
<dbReference type="SMR" id="B7NTL3"/>
<dbReference type="STRING" id="585057.ECIAI39_4619"/>
<dbReference type="GeneID" id="93777670"/>
<dbReference type="KEGG" id="ect:ECIAI39_4619"/>
<dbReference type="PATRIC" id="fig|585057.6.peg.4768"/>
<dbReference type="HOGENOM" id="CLU_156492_0_0_6"/>
<dbReference type="Proteomes" id="UP000000749">
    <property type="component" value="Chromosome"/>
</dbReference>
<dbReference type="GO" id="GO:0045283">
    <property type="term" value="C:fumarate reductase complex"/>
    <property type="evidence" value="ECO:0007669"/>
    <property type="project" value="UniProtKB-UniRule"/>
</dbReference>
<dbReference type="GO" id="GO:0005886">
    <property type="term" value="C:plasma membrane"/>
    <property type="evidence" value="ECO:0007669"/>
    <property type="project" value="UniProtKB-SubCell"/>
</dbReference>
<dbReference type="GO" id="GO:0000104">
    <property type="term" value="F:succinate dehydrogenase activity"/>
    <property type="evidence" value="ECO:0007669"/>
    <property type="project" value="UniProtKB-UniRule"/>
</dbReference>
<dbReference type="CDD" id="cd00546">
    <property type="entry name" value="QFR_TypeD_subunitC"/>
    <property type="match status" value="1"/>
</dbReference>
<dbReference type="FunFam" id="1.20.1300.10:FF:000003">
    <property type="entry name" value="Fumarate reductase subunit C"/>
    <property type="match status" value="1"/>
</dbReference>
<dbReference type="Gene3D" id="1.20.1300.10">
    <property type="entry name" value="Fumarate reductase/succinate dehydrogenase, transmembrane subunit"/>
    <property type="match status" value="1"/>
</dbReference>
<dbReference type="HAMAP" id="MF_00708">
    <property type="entry name" value="Fumarate_red_C"/>
    <property type="match status" value="1"/>
</dbReference>
<dbReference type="InterPro" id="IPR003510">
    <property type="entry name" value="Fumarate_red_C"/>
</dbReference>
<dbReference type="InterPro" id="IPR034804">
    <property type="entry name" value="SQR/QFR_C/D"/>
</dbReference>
<dbReference type="NCBIfam" id="NF003445">
    <property type="entry name" value="PRK04987.1"/>
    <property type="match status" value="1"/>
</dbReference>
<dbReference type="Pfam" id="PF02300">
    <property type="entry name" value="Fumarate_red_C"/>
    <property type="match status" value="1"/>
</dbReference>
<dbReference type="PIRSF" id="PIRSF000180">
    <property type="entry name" value="FrdC"/>
    <property type="match status" value="1"/>
</dbReference>
<dbReference type="SUPFAM" id="SSF81343">
    <property type="entry name" value="Fumarate reductase respiratory complex transmembrane subunits"/>
    <property type="match status" value="1"/>
</dbReference>
<gene>
    <name evidence="1" type="primary">frdC</name>
    <name type="ordered locus">ECIAI39_4619</name>
</gene>
<protein>
    <recommendedName>
        <fullName evidence="1">Fumarate reductase subunit C</fullName>
    </recommendedName>
    <alternativeName>
        <fullName evidence="1">Fumarate reductase 15 kDa hydrophobic protein</fullName>
    </alternativeName>
    <alternativeName>
        <fullName evidence="1">Quinol-fumarate reductase subunit C</fullName>
        <shortName evidence="1">QFR subunit C</shortName>
    </alternativeName>
</protein>
<comment type="function">
    <text evidence="1">Two distinct, membrane-bound, FAD-containing enzymes are responsible for the catalysis of fumarate and succinate interconversion; fumarate reductase is used in anaerobic growth, and succinate dehydrogenase is used in aerobic growth. Anchors the catalytic components of the fumarate reductase complex to the cell inner membrane, binds quinones.</text>
</comment>
<comment type="subunit">
    <text evidence="1">Part of an enzyme complex containing four subunits: a flavoprotein (FrdA), an iron-sulfur protein (FrdB), and two hydrophobic anchor proteins (FrdC and FrdD).</text>
</comment>
<comment type="subcellular location">
    <subcellularLocation>
        <location evidence="1">Cell inner membrane</location>
        <topology evidence="1">Multi-pass membrane protein</topology>
    </subcellularLocation>
</comment>
<comment type="similarity">
    <text evidence="1">Belongs to the FrdC family.</text>
</comment>
<reference key="1">
    <citation type="journal article" date="2009" name="PLoS Genet.">
        <title>Organised genome dynamics in the Escherichia coli species results in highly diverse adaptive paths.</title>
        <authorList>
            <person name="Touchon M."/>
            <person name="Hoede C."/>
            <person name="Tenaillon O."/>
            <person name="Barbe V."/>
            <person name="Baeriswyl S."/>
            <person name="Bidet P."/>
            <person name="Bingen E."/>
            <person name="Bonacorsi S."/>
            <person name="Bouchier C."/>
            <person name="Bouvet O."/>
            <person name="Calteau A."/>
            <person name="Chiapello H."/>
            <person name="Clermont O."/>
            <person name="Cruveiller S."/>
            <person name="Danchin A."/>
            <person name="Diard M."/>
            <person name="Dossat C."/>
            <person name="Karoui M.E."/>
            <person name="Frapy E."/>
            <person name="Garry L."/>
            <person name="Ghigo J.M."/>
            <person name="Gilles A.M."/>
            <person name="Johnson J."/>
            <person name="Le Bouguenec C."/>
            <person name="Lescat M."/>
            <person name="Mangenot S."/>
            <person name="Martinez-Jehanne V."/>
            <person name="Matic I."/>
            <person name="Nassif X."/>
            <person name="Oztas S."/>
            <person name="Petit M.A."/>
            <person name="Pichon C."/>
            <person name="Rouy Z."/>
            <person name="Ruf C.S."/>
            <person name="Schneider D."/>
            <person name="Tourret J."/>
            <person name="Vacherie B."/>
            <person name="Vallenet D."/>
            <person name="Medigue C."/>
            <person name="Rocha E.P.C."/>
            <person name="Denamur E."/>
        </authorList>
    </citation>
    <scope>NUCLEOTIDE SEQUENCE [LARGE SCALE GENOMIC DNA]</scope>
    <source>
        <strain>IAI39 / ExPEC</strain>
    </source>
</reference>
<keyword id="KW-0997">Cell inner membrane</keyword>
<keyword id="KW-1003">Cell membrane</keyword>
<keyword id="KW-0472">Membrane</keyword>
<keyword id="KW-0812">Transmembrane</keyword>
<keyword id="KW-1133">Transmembrane helix</keyword>
<sequence>MTTKRKPYVRPMTSTWWKKLPFYRFYMLREGTAVPAVWFSIELIFGLFALKNGPEAWAGFVDFLQNPVIVIINLITLAAALLHTKTWFELAPKAANIIVKDEKMGPEPIIKSLWAVTVVATIVILFVALYW</sequence>
<name>FRDC_ECO7I</name>